<protein>
    <recommendedName>
        <fullName>Pectate lyase C</fullName>
        <ecNumber>4.2.2.2</ecNumber>
    </recommendedName>
    <alternativeName>
        <fullName>Pectin lyase</fullName>
        <ecNumber>4.2.2.10</ecNumber>
    </alternativeName>
</protein>
<keyword id="KW-0106">Calcium</keyword>
<keyword id="KW-0456">Lyase</keyword>
<keyword id="KW-0479">Metal-binding</keyword>
<keyword id="KW-1185">Reference proteome</keyword>
<keyword id="KW-0964">Secreted</keyword>
<keyword id="KW-0732">Signal</keyword>
<reference key="1">
    <citation type="submission" date="1997-11" db="EMBL/GenBank/DDBJ databases">
        <title>Nucleotide sequence of the 300-304 chromosomal segment of Bacillus subtilis.</title>
        <authorList>
            <person name="Lazarevic V."/>
            <person name="Soldo B."/>
            <person name="Rivolta C."/>
            <person name="Reynolds S."/>
            <person name="Mauel C."/>
            <person name="Karamata D."/>
        </authorList>
    </citation>
    <scope>NUCLEOTIDE SEQUENCE [GENOMIC DNA]</scope>
</reference>
<reference key="2">
    <citation type="journal article" date="1997" name="Nature">
        <title>The complete genome sequence of the Gram-positive bacterium Bacillus subtilis.</title>
        <authorList>
            <person name="Kunst F."/>
            <person name="Ogasawara N."/>
            <person name="Moszer I."/>
            <person name="Albertini A.M."/>
            <person name="Alloni G."/>
            <person name="Azevedo V."/>
            <person name="Bertero M.G."/>
            <person name="Bessieres P."/>
            <person name="Bolotin A."/>
            <person name="Borchert S."/>
            <person name="Borriss R."/>
            <person name="Boursier L."/>
            <person name="Brans A."/>
            <person name="Braun M."/>
            <person name="Brignell S.C."/>
            <person name="Bron S."/>
            <person name="Brouillet S."/>
            <person name="Bruschi C.V."/>
            <person name="Caldwell B."/>
            <person name="Capuano V."/>
            <person name="Carter N.M."/>
            <person name="Choi S.-K."/>
            <person name="Codani J.-J."/>
            <person name="Connerton I.F."/>
            <person name="Cummings N.J."/>
            <person name="Daniel R.A."/>
            <person name="Denizot F."/>
            <person name="Devine K.M."/>
            <person name="Duesterhoeft A."/>
            <person name="Ehrlich S.D."/>
            <person name="Emmerson P.T."/>
            <person name="Entian K.-D."/>
            <person name="Errington J."/>
            <person name="Fabret C."/>
            <person name="Ferrari E."/>
            <person name="Foulger D."/>
            <person name="Fritz C."/>
            <person name="Fujita M."/>
            <person name="Fujita Y."/>
            <person name="Fuma S."/>
            <person name="Galizzi A."/>
            <person name="Galleron N."/>
            <person name="Ghim S.-Y."/>
            <person name="Glaser P."/>
            <person name="Goffeau A."/>
            <person name="Golightly E.J."/>
            <person name="Grandi G."/>
            <person name="Guiseppi G."/>
            <person name="Guy B.J."/>
            <person name="Haga K."/>
            <person name="Haiech J."/>
            <person name="Harwood C.R."/>
            <person name="Henaut A."/>
            <person name="Hilbert H."/>
            <person name="Holsappel S."/>
            <person name="Hosono S."/>
            <person name="Hullo M.-F."/>
            <person name="Itaya M."/>
            <person name="Jones L.-M."/>
            <person name="Joris B."/>
            <person name="Karamata D."/>
            <person name="Kasahara Y."/>
            <person name="Klaerr-Blanchard M."/>
            <person name="Klein C."/>
            <person name="Kobayashi Y."/>
            <person name="Koetter P."/>
            <person name="Koningstein G."/>
            <person name="Krogh S."/>
            <person name="Kumano M."/>
            <person name="Kurita K."/>
            <person name="Lapidus A."/>
            <person name="Lardinois S."/>
            <person name="Lauber J."/>
            <person name="Lazarevic V."/>
            <person name="Lee S.-M."/>
            <person name="Levine A."/>
            <person name="Liu H."/>
            <person name="Masuda S."/>
            <person name="Mauel C."/>
            <person name="Medigue C."/>
            <person name="Medina N."/>
            <person name="Mellado R.P."/>
            <person name="Mizuno M."/>
            <person name="Moestl D."/>
            <person name="Nakai S."/>
            <person name="Noback M."/>
            <person name="Noone D."/>
            <person name="O'Reilly M."/>
            <person name="Ogawa K."/>
            <person name="Ogiwara A."/>
            <person name="Oudega B."/>
            <person name="Park S.-H."/>
            <person name="Parro V."/>
            <person name="Pohl T.M."/>
            <person name="Portetelle D."/>
            <person name="Porwollik S."/>
            <person name="Prescott A.M."/>
            <person name="Presecan E."/>
            <person name="Pujic P."/>
            <person name="Purnelle B."/>
            <person name="Rapoport G."/>
            <person name="Rey M."/>
            <person name="Reynolds S."/>
            <person name="Rieger M."/>
            <person name="Rivolta C."/>
            <person name="Rocha E."/>
            <person name="Roche B."/>
            <person name="Rose M."/>
            <person name="Sadaie Y."/>
            <person name="Sato T."/>
            <person name="Scanlan E."/>
            <person name="Schleich S."/>
            <person name="Schroeter R."/>
            <person name="Scoffone F."/>
            <person name="Sekiguchi J."/>
            <person name="Sekowska A."/>
            <person name="Seror S.J."/>
            <person name="Serror P."/>
            <person name="Shin B.-S."/>
            <person name="Soldo B."/>
            <person name="Sorokin A."/>
            <person name="Tacconi E."/>
            <person name="Takagi T."/>
            <person name="Takahashi H."/>
            <person name="Takemaru K."/>
            <person name="Takeuchi M."/>
            <person name="Tamakoshi A."/>
            <person name="Tanaka T."/>
            <person name="Terpstra P."/>
            <person name="Tognoni A."/>
            <person name="Tosato V."/>
            <person name="Uchiyama S."/>
            <person name="Vandenbol M."/>
            <person name="Vannier F."/>
            <person name="Vassarotti A."/>
            <person name="Viari A."/>
            <person name="Wambutt R."/>
            <person name="Wedler E."/>
            <person name="Wedler H."/>
            <person name="Weitzenegger T."/>
            <person name="Winters P."/>
            <person name="Wipat A."/>
            <person name="Yamamoto H."/>
            <person name="Yamane K."/>
            <person name="Yasumoto K."/>
            <person name="Yata K."/>
            <person name="Yoshida K."/>
            <person name="Yoshikawa H.-F."/>
            <person name="Zumstein E."/>
            <person name="Yoshikawa H."/>
            <person name="Danchin A."/>
        </authorList>
    </citation>
    <scope>NUCLEOTIDE SEQUENCE [LARGE SCALE GENOMIC DNA]</scope>
    <source>
        <strain>168</strain>
    </source>
</reference>
<reference key="3">
    <citation type="journal article" date="2006" name="Microbiology">
        <title>Pectate lyase C from Bacillus subtilis: a novel endo-cleaving enzyme with activity on highly methylated pectin.</title>
        <authorList>
            <person name="Soriano M."/>
            <person name="Diaz P."/>
            <person name="Pastor F.I.J."/>
        </authorList>
    </citation>
    <scope>GENE NAME</scope>
    <scope>FUNCTION</scope>
    <scope>SUBSTRATE SPECIFICITY</scope>
    <scope>COFACTOR</scope>
    <scope>BIOPHYSICOCHEMICAL PROPERTIES</scope>
    <source>
        <strain>168</strain>
    </source>
</reference>
<comment type="function">
    <text evidence="3">Catalyzes the depolymerization of both polygalacturonate and pectins of methyl esterification degree from 22 to 89%, with an endo mode of action. In contrast to the majority of pectate lyases, displays high activity on highly methylated pectins. Is also able to cleave trigalacturonate to galacturonic acid and unsaturated digalacturonate.</text>
</comment>
<comment type="catalytic activity">
    <reaction>
        <text>Eliminative cleavage of (1-&gt;4)-alpha-D-galacturonan to give oligosaccharides with 4-deoxy-alpha-D-galact-4-enuronosyl groups at their non-reducing ends.</text>
        <dbReference type="EC" id="4.2.2.2"/>
    </reaction>
</comment>
<comment type="catalytic activity">
    <reaction>
        <text>Eliminative cleavage of (1-&gt;4)-alpha-D-galacturonan methyl ester to give oligosaccharides with 4-deoxy-6-O-methyl-alpha-D-galact-4-enuronosyl groups at their non-reducing ends.</text>
        <dbReference type="EC" id="4.2.2.10"/>
    </reaction>
</comment>
<comment type="cofactor">
    <cofactor evidence="3">
        <name>Ca(2+)</name>
        <dbReference type="ChEBI" id="CHEBI:29108"/>
    </cofactor>
    <text evidence="3">Binds 1 Ca(2+) ion per subunit.</text>
</comment>
<comment type="biophysicochemical properties">
    <kinetics>
        <Vmax evidence="3">256.7 umol/min/mg enzyme with 22% esterified pectin as substrate</Vmax>
        <Vmax evidence="3">59.6 umol/min/mg enzyme with polygalacturonic acid as substrate</Vmax>
    </kinetics>
    <phDependence>
        <text evidence="3">Optimum pH is 10.</text>
    </phDependence>
    <temperatureDependence>
        <text evidence="3">Optimum temperature is 65 degrees Celsius. Thermostable at 50 degrees Celsius in buffers at pH 7.</text>
    </temperatureDependence>
</comment>
<comment type="pathway">
    <text>Glycan metabolism; pectin degradation; 2-dehydro-3-deoxy-D-gluconate from pectin: step 2/5.</text>
</comment>
<comment type="subcellular location">
    <subcellularLocation>
        <location evidence="1">Secreted</location>
    </subcellularLocation>
</comment>
<comment type="miscellaneous">
    <text>Hg(2+) could replace calcium ion.</text>
</comment>
<comment type="similarity">
    <text evidence="4">Belongs to the polysaccharide lyase 3 family.</text>
</comment>
<accession>O34310</accession>
<accession>Q795F2</accession>
<proteinExistence type="evidence at protein level"/>
<feature type="signal peptide" evidence="2">
    <location>
        <begin position="1"/>
        <end position="27"/>
    </location>
</feature>
<feature type="chain" id="PRO_0000233104" description="Pectate lyase C">
    <location>
        <begin position="28"/>
        <end position="221"/>
    </location>
</feature>
<name>PLYC_BACSU</name>
<organism>
    <name type="scientific">Bacillus subtilis (strain 168)</name>
    <dbReference type="NCBI Taxonomy" id="224308"/>
    <lineage>
        <taxon>Bacteria</taxon>
        <taxon>Bacillati</taxon>
        <taxon>Bacillota</taxon>
        <taxon>Bacilli</taxon>
        <taxon>Bacillales</taxon>
        <taxon>Bacillaceae</taxon>
        <taxon>Bacillus</taxon>
    </lineage>
</organism>
<evidence type="ECO:0000250" key="1"/>
<evidence type="ECO:0000255" key="2"/>
<evidence type="ECO:0000269" key="3">
    <source>
    </source>
</evidence>
<evidence type="ECO:0000305" key="4"/>
<gene>
    <name type="primary">pelC</name>
    <name type="synonym">yvpA</name>
    <name type="ordered locus">BSU34950</name>
</gene>
<sequence>MKKIVSILFMFGLVMGFSQFQPSTVFAADKVVHETIIVPKNTTYDGKGQRFVAGKELGDGSQSENQDPVFRVEDGATLKNVVLGAPAADGVHTYGNVNIQNVKWEDVGEDALTVKKEGKVTIDGGSAQKASDKIFQINKASTFTVKNFTADNGGKFIRQLGGSTFHVDVIIDKCTITNMKEAIFRTDSKTSTVRMTNTRYSNVGQKWIGVQHIYENNNTQF</sequence>
<dbReference type="EC" id="4.2.2.2"/>
<dbReference type="EC" id="4.2.2.10"/>
<dbReference type="EMBL" id="AF017113">
    <property type="protein sequence ID" value="AAC67291.1"/>
    <property type="molecule type" value="Genomic_DNA"/>
</dbReference>
<dbReference type="EMBL" id="AL009126">
    <property type="protein sequence ID" value="CAB15500.1"/>
    <property type="molecule type" value="Genomic_DNA"/>
</dbReference>
<dbReference type="PIR" id="A70045">
    <property type="entry name" value="A70045"/>
</dbReference>
<dbReference type="RefSeq" id="NP_391375.1">
    <property type="nucleotide sequence ID" value="NC_000964.3"/>
</dbReference>
<dbReference type="RefSeq" id="WP_003242578.1">
    <property type="nucleotide sequence ID" value="NZ_OZ025638.1"/>
</dbReference>
<dbReference type="SMR" id="O34310"/>
<dbReference type="FunCoup" id="O34310">
    <property type="interactions" value="54"/>
</dbReference>
<dbReference type="STRING" id="224308.BSU34950"/>
<dbReference type="CAZy" id="PL3">
    <property type="family name" value="Polysaccharide Lyase Family 3"/>
</dbReference>
<dbReference type="PaxDb" id="224308-BSU34950"/>
<dbReference type="EnsemblBacteria" id="CAB15500">
    <property type="protein sequence ID" value="CAB15500"/>
    <property type="gene ID" value="BSU_34950"/>
</dbReference>
<dbReference type="GeneID" id="936594"/>
<dbReference type="KEGG" id="bsu:BSU34950"/>
<dbReference type="PATRIC" id="fig|224308.179.peg.3783"/>
<dbReference type="eggNOG" id="COG5297">
    <property type="taxonomic scope" value="Bacteria"/>
</dbReference>
<dbReference type="InParanoid" id="O34310"/>
<dbReference type="OrthoDB" id="148600at2"/>
<dbReference type="PhylomeDB" id="O34310"/>
<dbReference type="BioCyc" id="BSUB:BSU34950-MONOMER"/>
<dbReference type="UniPathway" id="UPA00545">
    <property type="reaction ID" value="UER00824"/>
</dbReference>
<dbReference type="Proteomes" id="UP000001570">
    <property type="component" value="Chromosome"/>
</dbReference>
<dbReference type="GO" id="GO:0005576">
    <property type="term" value="C:extracellular region"/>
    <property type="evidence" value="ECO:0007669"/>
    <property type="project" value="UniProtKB-SubCell"/>
</dbReference>
<dbReference type="GO" id="GO:0046872">
    <property type="term" value="F:metal ion binding"/>
    <property type="evidence" value="ECO:0007669"/>
    <property type="project" value="UniProtKB-KW"/>
</dbReference>
<dbReference type="GO" id="GO:0030570">
    <property type="term" value="F:pectate lyase activity"/>
    <property type="evidence" value="ECO:0007669"/>
    <property type="project" value="UniProtKB-EC"/>
</dbReference>
<dbReference type="GO" id="GO:0047490">
    <property type="term" value="F:pectin lyase activity"/>
    <property type="evidence" value="ECO:0007669"/>
    <property type="project" value="UniProtKB-EC"/>
</dbReference>
<dbReference type="GO" id="GO:0045490">
    <property type="term" value="P:pectin catabolic process"/>
    <property type="evidence" value="ECO:0007669"/>
    <property type="project" value="UniProtKB-UniPathway"/>
</dbReference>
<dbReference type="Gene3D" id="2.160.20.10">
    <property type="entry name" value="Single-stranded right-handed beta-helix, Pectin lyase-like"/>
    <property type="match status" value="1"/>
</dbReference>
<dbReference type="InterPro" id="IPR004898">
    <property type="entry name" value="Pectate_lyase_PlyH/PlyE-like"/>
</dbReference>
<dbReference type="InterPro" id="IPR012334">
    <property type="entry name" value="Pectin_lyas_fold"/>
</dbReference>
<dbReference type="InterPro" id="IPR011050">
    <property type="entry name" value="Pectin_lyase_fold/virulence"/>
</dbReference>
<dbReference type="PANTHER" id="PTHR33407">
    <property type="entry name" value="PECTATE LYASE F-RELATED"/>
    <property type="match status" value="1"/>
</dbReference>
<dbReference type="PANTHER" id="PTHR33407:SF9">
    <property type="entry name" value="PECTATE LYASE F-RELATED"/>
    <property type="match status" value="1"/>
</dbReference>
<dbReference type="Pfam" id="PF03211">
    <property type="entry name" value="Pectate_lyase"/>
    <property type="match status" value="1"/>
</dbReference>
<dbReference type="SUPFAM" id="SSF51126">
    <property type="entry name" value="Pectin lyase-like"/>
    <property type="match status" value="1"/>
</dbReference>